<accession>Q12322</accession>
<accession>D6W1V3</accession>
<protein>
    <recommendedName>
        <fullName>Putative uncharacterized protein YOL114C</fullName>
    </recommendedName>
</protein>
<sequence length="202" mass="23190">MTTLMGKFKLTGRSPLFVLQPMLHCKKQQFVEEAVRLISNKKIGKKSDFVQARNWVGALNVTGLPLNQFILRYDRASGPGGQNVNKVNSKCTLTLSGLSNCAWIPQEVRNILSSGRFRYYAKGSDSIVIQSDETRSRETNKLKCFEKLVQEIRQTCQFPNDTTAETSKKWNKIKEKANKERLLDKKVHSDKKKNRSKIKFNY</sequence>
<organism>
    <name type="scientific">Saccharomyces cerevisiae (strain ATCC 204508 / S288c)</name>
    <name type="common">Baker's yeast</name>
    <dbReference type="NCBI Taxonomy" id="559292"/>
    <lineage>
        <taxon>Eukaryota</taxon>
        <taxon>Fungi</taxon>
        <taxon>Dikarya</taxon>
        <taxon>Ascomycota</taxon>
        <taxon>Saccharomycotina</taxon>
        <taxon>Saccharomycetes</taxon>
        <taxon>Saccharomycetales</taxon>
        <taxon>Saccharomycetaceae</taxon>
        <taxon>Saccharomyces</taxon>
    </lineage>
</organism>
<name>YO114_YEAST</name>
<dbReference type="EMBL" id="Z48149">
    <property type="protein sequence ID" value="CAA88146.1"/>
    <property type="molecule type" value="Genomic_DNA"/>
</dbReference>
<dbReference type="EMBL" id="Z74856">
    <property type="protein sequence ID" value="CAA99133.1"/>
    <property type="molecule type" value="Genomic_DNA"/>
</dbReference>
<dbReference type="EMBL" id="AY558007">
    <property type="protein sequence ID" value="AAS56333.1"/>
    <property type="molecule type" value="Genomic_DNA"/>
</dbReference>
<dbReference type="EMBL" id="BK006948">
    <property type="protein sequence ID" value="DAA10669.1"/>
    <property type="molecule type" value="Genomic_DNA"/>
</dbReference>
<dbReference type="PIR" id="S51883">
    <property type="entry name" value="S51883"/>
</dbReference>
<dbReference type="SMR" id="Q12322"/>
<dbReference type="BioGRID" id="34286">
    <property type="interactions" value="55"/>
</dbReference>
<dbReference type="FunCoup" id="Q12322">
    <property type="interactions" value="305"/>
</dbReference>
<dbReference type="IntAct" id="Q12322">
    <property type="interactions" value="1"/>
</dbReference>
<dbReference type="STRING" id="4932.YOL114C"/>
<dbReference type="PaxDb" id="4932-YOL114C"/>
<dbReference type="PeptideAtlas" id="Q12322"/>
<dbReference type="EnsemblFungi" id="YOL114C_mRNA">
    <property type="protein sequence ID" value="YOL114C"/>
    <property type="gene ID" value="YOL114C"/>
</dbReference>
<dbReference type="KEGG" id="sce:YOL114C"/>
<dbReference type="AGR" id="SGD:S000005474"/>
<dbReference type="SGD" id="S000005474">
    <property type="gene designation" value="YOL114C"/>
</dbReference>
<dbReference type="VEuPathDB" id="FungiDB:YOL114C"/>
<dbReference type="eggNOG" id="KOG3429">
    <property type="taxonomic scope" value="Eukaryota"/>
</dbReference>
<dbReference type="HOGENOM" id="CLU_089470_0_0_1"/>
<dbReference type="InParanoid" id="Q12322"/>
<dbReference type="OMA" id="WYNSFDA"/>
<dbReference type="OrthoDB" id="270639at2759"/>
<dbReference type="BioCyc" id="YEAST:G3O-33511-MONOMER"/>
<dbReference type="BioGRID-ORCS" id="854035">
    <property type="hits" value="0 hits in 10 CRISPR screens"/>
</dbReference>
<dbReference type="PRO" id="PR:Q12322"/>
<dbReference type="Proteomes" id="UP000002311">
    <property type="component" value="Chromosome XV"/>
</dbReference>
<dbReference type="RNAct" id="Q12322">
    <property type="molecule type" value="protein"/>
</dbReference>
<dbReference type="GO" id="GO:0005762">
    <property type="term" value="C:mitochondrial large ribosomal subunit"/>
    <property type="evidence" value="ECO:0000314"/>
    <property type="project" value="SGD"/>
</dbReference>
<dbReference type="GO" id="GO:0004045">
    <property type="term" value="F:peptidyl-tRNA hydrolase activity"/>
    <property type="evidence" value="ECO:0000314"/>
    <property type="project" value="SGD"/>
</dbReference>
<dbReference type="GO" id="GO:0016150">
    <property type="term" value="F:translation release factor activity, codon nonspecific"/>
    <property type="evidence" value="ECO:0000318"/>
    <property type="project" value="GO_Central"/>
</dbReference>
<dbReference type="GO" id="GO:0032543">
    <property type="term" value="P:mitochondrial translation"/>
    <property type="evidence" value="ECO:0000315"/>
    <property type="project" value="SGD"/>
</dbReference>
<dbReference type="GO" id="GO:0070126">
    <property type="term" value="P:mitochondrial translational termination"/>
    <property type="evidence" value="ECO:0000318"/>
    <property type="project" value="GO_Central"/>
</dbReference>
<dbReference type="FunFam" id="3.30.160.20:FF:000105">
    <property type="entry name" value="YOL114C-like protein"/>
    <property type="match status" value="1"/>
</dbReference>
<dbReference type="Gene3D" id="3.30.160.20">
    <property type="match status" value="1"/>
</dbReference>
<dbReference type="InterPro" id="IPR052104">
    <property type="entry name" value="Mito_Release_Factor_mL62"/>
</dbReference>
<dbReference type="InterPro" id="IPR000352">
    <property type="entry name" value="Pep_chain_release_fac_I"/>
</dbReference>
<dbReference type="PANTHER" id="PTHR11075:SF54">
    <property type="entry name" value="LARGE RIBOSOMAL SUBUNIT PROTEIN ML62"/>
    <property type="match status" value="1"/>
</dbReference>
<dbReference type="PANTHER" id="PTHR11075">
    <property type="entry name" value="PEPTIDE CHAIN RELEASE FACTOR"/>
    <property type="match status" value="1"/>
</dbReference>
<dbReference type="Pfam" id="PF00472">
    <property type="entry name" value="RF-1"/>
    <property type="match status" value="1"/>
</dbReference>
<dbReference type="SUPFAM" id="SSF110916">
    <property type="entry name" value="Peptidyl-tRNA hydrolase domain-like"/>
    <property type="match status" value="1"/>
</dbReference>
<feature type="chain" id="PRO_0000203489" description="Putative uncharacterized protein YOL114C">
    <location>
        <begin position="1"/>
        <end position="202"/>
    </location>
</feature>
<proteinExistence type="predicted"/>
<keyword id="KW-1185">Reference proteome</keyword>
<reference key="1">
    <citation type="journal article" date="1995" name="Yeast">
        <title>Sequence analysis of a 44 kb DNA fragment of yeast chromosome XV including the Ty1-H3 retrotransposon, the suf1(+) frameshift suppressor gene for tRNA-Gly, the yeast transfer RNA-Thr-1a and a delta element.</title>
        <authorList>
            <person name="Vandenbol M."/>
            <person name="Durand P."/>
            <person name="Portetelle D."/>
            <person name="Hilger F."/>
        </authorList>
    </citation>
    <scope>NUCLEOTIDE SEQUENCE [GENOMIC DNA]</scope>
</reference>
<reference key="2">
    <citation type="journal article" date="1997" name="Nature">
        <title>The nucleotide sequence of Saccharomyces cerevisiae chromosome XV.</title>
        <authorList>
            <person name="Dujon B."/>
            <person name="Albermann K."/>
            <person name="Aldea M."/>
            <person name="Alexandraki D."/>
            <person name="Ansorge W."/>
            <person name="Arino J."/>
            <person name="Benes V."/>
            <person name="Bohn C."/>
            <person name="Bolotin-Fukuhara M."/>
            <person name="Bordonne R."/>
            <person name="Boyer J."/>
            <person name="Camasses A."/>
            <person name="Casamayor A."/>
            <person name="Casas C."/>
            <person name="Cheret G."/>
            <person name="Cziepluch C."/>
            <person name="Daignan-Fornier B."/>
            <person name="Dang V.-D."/>
            <person name="de Haan M."/>
            <person name="Delius H."/>
            <person name="Durand P."/>
            <person name="Fairhead C."/>
            <person name="Feldmann H."/>
            <person name="Gaillon L."/>
            <person name="Galisson F."/>
            <person name="Gamo F.-J."/>
            <person name="Gancedo C."/>
            <person name="Goffeau A."/>
            <person name="Goulding S.E."/>
            <person name="Grivell L.A."/>
            <person name="Habbig B."/>
            <person name="Hand N.J."/>
            <person name="Hani J."/>
            <person name="Hattenhorst U."/>
            <person name="Hebling U."/>
            <person name="Hernando Y."/>
            <person name="Herrero E."/>
            <person name="Heumann K."/>
            <person name="Hiesel R."/>
            <person name="Hilger F."/>
            <person name="Hofmann B."/>
            <person name="Hollenberg C.P."/>
            <person name="Hughes B."/>
            <person name="Jauniaux J.-C."/>
            <person name="Kalogeropoulos A."/>
            <person name="Katsoulou C."/>
            <person name="Kordes E."/>
            <person name="Lafuente M.J."/>
            <person name="Landt O."/>
            <person name="Louis E.J."/>
            <person name="Maarse A.C."/>
            <person name="Madania A."/>
            <person name="Mannhaupt G."/>
            <person name="Marck C."/>
            <person name="Martin R.P."/>
            <person name="Mewes H.-W."/>
            <person name="Michaux G."/>
            <person name="Paces V."/>
            <person name="Parle-McDermott A.G."/>
            <person name="Pearson B.M."/>
            <person name="Perrin A."/>
            <person name="Pettersson B."/>
            <person name="Poch O."/>
            <person name="Pohl T.M."/>
            <person name="Poirey R."/>
            <person name="Portetelle D."/>
            <person name="Pujol A."/>
            <person name="Purnelle B."/>
            <person name="Ramezani Rad M."/>
            <person name="Rechmann S."/>
            <person name="Schwager C."/>
            <person name="Schweizer M."/>
            <person name="Sor F."/>
            <person name="Sterky F."/>
            <person name="Tarassov I.A."/>
            <person name="Teodoru C."/>
            <person name="Tettelin H."/>
            <person name="Thierry A."/>
            <person name="Tobiasch E."/>
            <person name="Tzermia M."/>
            <person name="Uhlen M."/>
            <person name="Unseld M."/>
            <person name="Valens M."/>
            <person name="Vandenbol M."/>
            <person name="Vetter I."/>
            <person name="Vlcek C."/>
            <person name="Voet M."/>
            <person name="Volckaert G."/>
            <person name="Voss H."/>
            <person name="Wambutt R."/>
            <person name="Wedler H."/>
            <person name="Wiemann S."/>
            <person name="Winsor B."/>
            <person name="Wolfe K.H."/>
            <person name="Zollner A."/>
            <person name="Zumstein E."/>
            <person name="Kleine K."/>
        </authorList>
    </citation>
    <scope>NUCLEOTIDE SEQUENCE [LARGE SCALE GENOMIC DNA]</scope>
    <source>
        <strain>ATCC 204508 / S288c</strain>
    </source>
</reference>
<reference key="3">
    <citation type="journal article" date="2014" name="G3 (Bethesda)">
        <title>The reference genome sequence of Saccharomyces cerevisiae: Then and now.</title>
        <authorList>
            <person name="Engel S.R."/>
            <person name="Dietrich F.S."/>
            <person name="Fisk D.G."/>
            <person name="Binkley G."/>
            <person name="Balakrishnan R."/>
            <person name="Costanzo M.C."/>
            <person name="Dwight S.S."/>
            <person name="Hitz B.C."/>
            <person name="Karra K."/>
            <person name="Nash R.S."/>
            <person name="Weng S."/>
            <person name="Wong E.D."/>
            <person name="Lloyd P."/>
            <person name="Skrzypek M.S."/>
            <person name="Miyasato S.R."/>
            <person name="Simison M."/>
            <person name="Cherry J.M."/>
        </authorList>
    </citation>
    <scope>GENOME REANNOTATION</scope>
    <source>
        <strain>ATCC 204508 / S288c</strain>
    </source>
</reference>
<reference key="4">
    <citation type="journal article" date="2007" name="Genome Res.">
        <title>Approaching a complete repository of sequence-verified protein-encoding clones for Saccharomyces cerevisiae.</title>
        <authorList>
            <person name="Hu Y."/>
            <person name="Rolfs A."/>
            <person name="Bhullar B."/>
            <person name="Murthy T.V.S."/>
            <person name="Zhu C."/>
            <person name="Berger M.F."/>
            <person name="Camargo A.A."/>
            <person name="Kelley F."/>
            <person name="McCarron S."/>
            <person name="Jepson D."/>
            <person name="Richardson A."/>
            <person name="Raphael J."/>
            <person name="Moreira D."/>
            <person name="Taycher E."/>
            <person name="Zuo D."/>
            <person name="Mohr S."/>
            <person name="Kane M.F."/>
            <person name="Williamson J."/>
            <person name="Simpson A.J.G."/>
            <person name="Bulyk M.L."/>
            <person name="Harlow E."/>
            <person name="Marsischky G."/>
            <person name="Kolodner R.D."/>
            <person name="LaBaer J."/>
        </authorList>
    </citation>
    <scope>NUCLEOTIDE SEQUENCE [GENOMIC DNA]</scope>
    <source>
        <strain>ATCC 204508 / S288c</strain>
    </source>
</reference>
<gene>
    <name type="ordered locus">YOL114C</name>
    <name type="ORF">HRE202</name>
</gene>